<comment type="function">
    <text evidence="1">F(1)F(0) ATP synthase produces ATP from ADP in the presence of a proton or sodium gradient. F-type ATPases consist of two structural domains, F(1) containing the extramembraneous catalytic core and F(0) containing the membrane proton channel, linked together by a central stalk and a peripheral stalk. During catalysis, ATP synthesis in the catalytic domain of F(1) is coupled via a rotary mechanism of the central stalk subunits to proton translocation.</text>
</comment>
<comment type="function">
    <text evidence="1">This protein is part of the stalk that links CF(0) to CF(1). It either transmits conformational changes from CF(0) to CF(1) or is implicated in proton conduction.</text>
</comment>
<comment type="subunit">
    <text evidence="1">F-type ATPases have 2 components, F(1) - the catalytic core - and F(0) - the membrane proton channel. F(1) has five subunits: alpha(3), beta(3), gamma(1), delta(1), epsilon(1). F(0) has three main subunits: a(1), b(2) and c(10-14). The alpha and beta chains form an alternating ring which encloses part of the gamma chain. F(1) is attached to F(0) by a central stalk formed by the gamma and epsilon chains, while a peripheral stalk is formed by the delta and b chains.</text>
</comment>
<comment type="subcellular location">
    <subcellularLocation>
        <location evidence="1">Cell membrane</location>
        <topology evidence="1">Peripheral membrane protein</topology>
    </subcellularLocation>
</comment>
<comment type="similarity">
    <text evidence="1">Belongs to the ATPase delta chain family.</text>
</comment>
<accession>Q4A601</accession>
<keyword id="KW-0066">ATP synthesis</keyword>
<keyword id="KW-1003">Cell membrane</keyword>
<keyword id="KW-0139">CF(1)</keyword>
<keyword id="KW-0375">Hydrogen ion transport</keyword>
<keyword id="KW-0406">Ion transport</keyword>
<keyword id="KW-0472">Membrane</keyword>
<keyword id="KW-1185">Reference proteome</keyword>
<keyword id="KW-0813">Transport</keyword>
<protein>
    <recommendedName>
        <fullName evidence="1">ATP synthase subunit delta</fullName>
    </recommendedName>
    <alternativeName>
        <fullName evidence="1">ATP synthase F(1) sector subunit delta</fullName>
    </alternativeName>
    <alternativeName>
        <fullName evidence="1">F-type ATPase subunit delta</fullName>
        <shortName evidence="1">F-ATPase subunit delta</shortName>
    </alternativeName>
</protein>
<gene>
    <name evidence="1" type="primary">atpH</name>
    <name type="ordered locus">MS53_0408</name>
</gene>
<dbReference type="EMBL" id="AE017245">
    <property type="protein sequence ID" value="AAZ43820.1"/>
    <property type="molecule type" value="Genomic_DNA"/>
</dbReference>
<dbReference type="RefSeq" id="WP_011283551.1">
    <property type="nucleotide sequence ID" value="NC_007294.1"/>
</dbReference>
<dbReference type="SMR" id="Q4A601"/>
<dbReference type="STRING" id="262723.MS53_0408"/>
<dbReference type="KEGG" id="msy:MS53_0408"/>
<dbReference type="eggNOG" id="COG0712">
    <property type="taxonomic scope" value="Bacteria"/>
</dbReference>
<dbReference type="HOGENOM" id="CLU_085114_4_2_14"/>
<dbReference type="OrthoDB" id="400380at2"/>
<dbReference type="Proteomes" id="UP000000549">
    <property type="component" value="Chromosome"/>
</dbReference>
<dbReference type="GO" id="GO:0005886">
    <property type="term" value="C:plasma membrane"/>
    <property type="evidence" value="ECO:0007669"/>
    <property type="project" value="UniProtKB-SubCell"/>
</dbReference>
<dbReference type="GO" id="GO:0045259">
    <property type="term" value="C:proton-transporting ATP synthase complex"/>
    <property type="evidence" value="ECO:0007669"/>
    <property type="project" value="UniProtKB-KW"/>
</dbReference>
<dbReference type="GO" id="GO:0046933">
    <property type="term" value="F:proton-transporting ATP synthase activity, rotational mechanism"/>
    <property type="evidence" value="ECO:0007669"/>
    <property type="project" value="UniProtKB-UniRule"/>
</dbReference>
<dbReference type="Gene3D" id="1.10.520.20">
    <property type="entry name" value="N-terminal domain of the delta subunit of the F1F0-ATP synthase"/>
    <property type="match status" value="1"/>
</dbReference>
<dbReference type="HAMAP" id="MF_01416">
    <property type="entry name" value="ATP_synth_delta_bact"/>
    <property type="match status" value="1"/>
</dbReference>
<dbReference type="InterPro" id="IPR026015">
    <property type="entry name" value="ATP_synth_OSCP/delta_N_sf"/>
</dbReference>
<dbReference type="InterPro" id="IPR000711">
    <property type="entry name" value="ATPase_OSCP/dsu"/>
</dbReference>
<dbReference type="NCBIfam" id="TIGR01145">
    <property type="entry name" value="ATP_synt_delta"/>
    <property type="match status" value="1"/>
</dbReference>
<dbReference type="PANTHER" id="PTHR11910">
    <property type="entry name" value="ATP SYNTHASE DELTA CHAIN"/>
    <property type="match status" value="1"/>
</dbReference>
<dbReference type="Pfam" id="PF00213">
    <property type="entry name" value="OSCP"/>
    <property type="match status" value="1"/>
</dbReference>
<dbReference type="PRINTS" id="PR00125">
    <property type="entry name" value="ATPASEDELTA"/>
</dbReference>
<dbReference type="SUPFAM" id="SSF47928">
    <property type="entry name" value="N-terminal domain of the delta subunit of the F1F0-ATP synthase"/>
    <property type="match status" value="1"/>
</dbReference>
<organism>
    <name type="scientific">Mycoplasmopsis synoviae (strain 53)</name>
    <name type="common">Mycoplasma synoviae</name>
    <dbReference type="NCBI Taxonomy" id="262723"/>
    <lineage>
        <taxon>Bacteria</taxon>
        <taxon>Bacillati</taxon>
        <taxon>Mycoplasmatota</taxon>
        <taxon>Mycoplasmoidales</taxon>
        <taxon>Metamycoplasmataceae</taxon>
        <taxon>Mycoplasmopsis</taxon>
    </lineage>
</organism>
<evidence type="ECO:0000255" key="1">
    <source>
        <dbReference type="HAMAP-Rule" id="MF_01416"/>
    </source>
</evidence>
<feature type="chain" id="PRO_0000382126" description="ATP synthase subunit delta">
    <location>
        <begin position="1"/>
        <end position="183"/>
    </location>
</feature>
<reference key="1">
    <citation type="journal article" date="2005" name="J. Bacteriol.">
        <title>Swine and poultry pathogens: the complete genome sequences of two strains of Mycoplasma hyopneumoniae and a strain of Mycoplasma synoviae.</title>
        <authorList>
            <person name="Vasconcelos A.T.R."/>
            <person name="Ferreira H.B."/>
            <person name="Bizarro C.V."/>
            <person name="Bonatto S.L."/>
            <person name="Carvalho M.O."/>
            <person name="Pinto P.M."/>
            <person name="Almeida D.F."/>
            <person name="Almeida L.G.P."/>
            <person name="Almeida R."/>
            <person name="Alves-Junior L."/>
            <person name="Assuncao E.N."/>
            <person name="Azevedo V.A.C."/>
            <person name="Bogo M.R."/>
            <person name="Brigido M.M."/>
            <person name="Brocchi M."/>
            <person name="Burity H.A."/>
            <person name="Camargo A.A."/>
            <person name="Camargo S.S."/>
            <person name="Carepo M.S."/>
            <person name="Carraro D.M."/>
            <person name="de Mattos Cascardo J.C."/>
            <person name="Castro L.A."/>
            <person name="Cavalcanti G."/>
            <person name="Chemale G."/>
            <person name="Collevatti R.G."/>
            <person name="Cunha C.W."/>
            <person name="Dallagiovanna B."/>
            <person name="Dambros B.P."/>
            <person name="Dellagostin O.A."/>
            <person name="Falcao C."/>
            <person name="Fantinatti-Garboggini F."/>
            <person name="Felipe M.S.S."/>
            <person name="Fiorentin L."/>
            <person name="Franco G.R."/>
            <person name="Freitas N.S.A."/>
            <person name="Frias D."/>
            <person name="Grangeiro T.B."/>
            <person name="Grisard E.C."/>
            <person name="Guimaraes C.T."/>
            <person name="Hungria M."/>
            <person name="Jardim S.N."/>
            <person name="Krieger M.A."/>
            <person name="Laurino J.P."/>
            <person name="Lima L.F.A."/>
            <person name="Lopes M.I."/>
            <person name="Loreto E.L.S."/>
            <person name="Madeira H.M.F."/>
            <person name="Manfio G.P."/>
            <person name="Maranhao A.Q."/>
            <person name="Martinkovics C.T."/>
            <person name="Medeiros S.R.B."/>
            <person name="Moreira M.A.M."/>
            <person name="Neiva M."/>
            <person name="Ramalho-Neto C.E."/>
            <person name="Nicolas M.F."/>
            <person name="Oliveira S.C."/>
            <person name="Paixao R.F.C."/>
            <person name="Pedrosa F.O."/>
            <person name="Pena S.D.J."/>
            <person name="Pereira M."/>
            <person name="Pereira-Ferrari L."/>
            <person name="Piffer I."/>
            <person name="Pinto L.S."/>
            <person name="Potrich D.P."/>
            <person name="Salim A.C.M."/>
            <person name="Santos F.R."/>
            <person name="Schmitt R."/>
            <person name="Schneider M.P.C."/>
            <person name="Schrank A."/>
            <person name="Schrank I.S."/>
            <person name="Schuck A.F."/>
            <person name="Seuanez H.N."/>
            <person name="Silva D.W."/>
            <person name="Silva R."/>
            <person name="Silva S.C."/>
            <person name="Soares C.M.A."/>
            <person name="Souza K.R.L."/>
            <person name="Souza R.C."/>
            <person name="Staats C.C."/>
            <person name="Steffens M.B.R."/>
            <person name="Teixeira S.M.R."/>
            <person name="Urmenyi T.P."/>
            <person name="Vainstein M.H."/>
            <person name="Zuccherato L.W."/>
            <person name="Simpson A.J.G."/>
            <person name="Zaha A."/>
        </authorList>
    </citation>
    <scope>NUCLEOTIDE SEQUENCE [LARGE SCALE GENOMIC DNA]</scope>
    <source>
        <strain>53</strain>
    </source>
</reference>
<sequence>MYVKVNPSSYSVAIYEIAKESNKIKTFHEQFSFVKKVIEKNPQLITFLKNDEIALEKRFELIDEIFGSLEVDVKNSIKVALVRNMIFVLRKIIVDFLKITNYELGIKFAKVITAYPLSDSELEKIQKKLNEKTKKIVEISTEVDEKLLSGYKIIFSNQLYERNYNNDLQKIKKTIIKGKEDEK</sequence>
<proteinExistence type="inferred from homology"/>
<name>ATPD_MYCS5</name>